<sequence length="150" mass="16238">MQVLVDADACPAVIKDMLFRAARRAEICVTLVANQFLRTPPSPFIKAVQVPAGFDVADARIVELAEPGDLVITADIPLAAAVLDKGAHALDPRGNWFSRENIEERLSTRAMMDQLRSAGIDTGGPAPFSARDGKTFASQLDRFLARHAPR</sequence>
<comment type="similarity">
    <text evidence="1">Belongs to the UPF0178 family.</text>
</comment>
<protein>
    <recommendedName>
        <fullName evidence="1">UPF0178 protein Bcen_1180</fullName>
    </recommendedName>
</protein>
<accession>Q1BWB8</accession>
<gene>
    <name type="ordered locus">Bcen_1180</name>
</gene>
<evidence type="ECO:0000255" key="1">
    <source>
        <dbReference type="HAMAP-Rule" id="MF_00489"/>
    </source>
</evidence>
<dbReference type="EMBL" id="CP000378">
    <property type="protein sequence ID" value="ABF76087.1"/>
    <property type="molecule type" value="Genomic_DNA"/>
</dbReference>
<dbReference type="HOGENOM" id="CLU_106619_2_1_4"/>
<dbReference type="CDD" id="cd18720">
    <property type="entry name" value="PIN_YqxD-like"/>
    <property type="match status" value="1"/>
</dbReference>
<dbReference type="HAMAP" id="MF_00489">
    <property type="entry name" value="UPF0178"/>
    <property type="match status" value="1"/>
</dbReference>
<dbReference type="InterPro" id="IPR003791">
    <property type="entry name" value="UPF0178"/>
</dbReference>
<dbReference type="NCBIfam" id="NF001095">
    <property type="entry name" value="PRK00124.1"/>
    <property type="match status" value="1"/>
</dbReference>
<dbReference type="PANTHER" id="PTHR35146">
    <property type="entry name" value="UPF0178 PROTEIN YAII"/>
    <property type="match status" value="1"/>
</dbReference>
<dbReference type="PANTHER" id="PTHR35146:SF1">
    <property type="entry name" value="UPF0178 PROTEIN YAII"/>
    <property type="match status" value="1"/>
</dbReference>
<dbReference type="Pfam" id="PF02639">
    <property type="entry name" value="DUF188"/>
    <property type="match status" value="1"/>
</dbReference>
<organism>
    <name type="scientific">Burkholderia orbicola (strain AU 1054)</name>
    <dbReference type="NCBI Taxonomy" id="331271"/>
    <lineage>
        <taxon>Bacteria</taxon>
        <taxon>Pseudomonadati</taxon>
        <taxon>Pseudomonadota</taxon>
        <taxon>Betaproteobacteria</taxon>
        <taxon>Burkholderiales</taxon>
        <taxon>Burkholderiaceae</taxon>
        <taxon>Burkholderia</taxon>
        <taxon>Burkholderia cepacia complex</taxon>
        <taxon>Burkholderia orbicola</taxon>
    </lineage>
</organism>
<name>Y1180_BURO1</name>
<reference key="1">
    <citation type="submission" date="2006-05" db="EMBL/GenBank/DDBJ databases">
        <title>Complete sequence of chromosome 1 of Burkholderia cenocepacia AU 1054.</title>
        <authorList>
            <consortium name="US DOE Joint Genome Institute"/>
            <person name="Copeland A."/>
            <person name="Lucas S."/>
            <person name="Lapidus A."/>
            <person name="Barry K."/>
            <person name="Detter J.C."/>
            <person name="Glavina del Rio T."/>
            <person name="Hammon N."/>
            <person name="Israni S."/>
            <person name="Dalin E."/>
            <person name="Tice H."/>
            <person name="Pitluck S."/>
            <person name="Chain P."/>
            <person name="Malfatti S."/>
            <person name="Shin M."/>
            <person name="Vergez L."/>
            <person name="Schmutz J."/>
            <person name="Larimer F."/>
            <person name="Land M."/>
            <person name="Hauser L."/>
            <person name="Kyrpides N."/>
            <person name="Lykidis A."/>
            <person name="LiPuma J.J."/>
            <person name="Konstantinidis K."/>
            <person name="Tiedje J.M."/>
            <person name="Richardson P."/>
        </authorList>
    </citation>
    <scope>NUCLEOTIDE SEQUENCE [LARGE SCALE GENOMIC DNA]</scope>
    <source>
        <strain>AU 1054</strain>
    </source>
</reference>
<feature type="chain" id="PRO_1000014411" description="UPF0178 protein Bcen_1180">
    <location>
        <begin position="1"/>
        <end position="150"/>
    </location>
</feature>
<proteinExistence type="inferred from homology"/>